<feature type="chain" id="PRO_0000381593" description="Biotin synthase">
    <location>
        <begin position="1"/>
        <end position="355"/>
    </location>
</feature>
<feature type="domain" description="Radical SAM core" evidence="2">
    <location>
        <begin position="51"/>
        <end position="275"/>
    </location>
</feature>
<feature type="binding site" evidence="1">
    <location>
        <position position="66"/>
    </location>
    <ligand>
        <name>[4Fe-4S] cluster</name>
        <dbReference type="ChEBI" id="CHEBI:49883"/>
        <note>4Fe-4S-S-AdoMet</note>
    </ligand>
</feature>
<feature type="binding site" evidence="1">
    <location>
        <position position="70"/>
    </location>
    <ligand>
        <name>[4Fe-4S] cluster</name>
        <dbReference type="ChEBI" id="CHEBI:49883"/>
        <note>4Fe-4S-S-AdoMet</note>
    </ligand>
</feature>
<feature type="binding site" evidence="1">
    <location>
        <position position="73"/>
    </location>
    <ligand>
        <name>[4Fe-4S] cluster</name>
        <dbReference type="ChEBI" id="CHEBI:49883"/>
        <note>4Fe-4S-S-AdoMet</note>
    </ligand>
</feature>
<feature type="binding site" evidence="1">
    <location>
        <position position="110"/>
    </location>
    <ligand>
        <name>[2Fe-2S] cluster</name>
        <dbReference type="ChEBI" id="CHEBI:190135"/>
    </ligand>
</feature>
<feature type="binding site" evidence="1">
    <location>
        <position position="143"/>
    </location>
    <ligand>
        <name>[2Fe-2S] cluster</name>
        <dbReference type="ChEBI" id="CHEBI:190135"/>
    </ligand>
</feature>
<feature type="binding site" evidence="1">
    <location>
        <position position="203"/>
    </location>
    <ligand>
        <name>[2Fe-2S] cluster</name>
        <dbReference type="ChEBI" id="CHEBI:190135"/>
    </ligand>
</feature>
<feature type="binding site" evidence="1">
    <location>
        <position position="273"/>
    </location>
    <ligand>
        <name>[2Fe-2S] cluster</name>
        <dbReference type="ChEBI" id="CHEBI:190135"/>
    </ligand>
</feature>
<protein>
    <recommendedName>
        <fullName evidence="1">Biotin synthase</fullName>
        <ecNumber evidence="1">2.8.1.6</ecNumber>
    </recommendedName>
</protein>
<gene>
    <name evidence="1" type="primary">bioB</name>
    <name type="ordered locus">SACE_4683</name>
</gene>
<reference key="1">
    <citation type="journal article" date="2007" name="Nat. Biotechnol.">
        <title>Complete genome sequence of the erythromycin-producing bacterium Saccharopolyspora erythraea NRRL23338.</title>
        <authorList>
            <person name="Oliynyk M."/>
            <person name="Samborskyy M."/>
            <person name="Lester J.B."/>
            <person name="Mironenko T."/>
            <person name="Scott N."/>
            <person name="Dickens S."/>
            <person name="Haydock S.F."/>
            <person name="Leadlay P.F."/>
        </authorList>
    </citation>
    <scope>NUCLEOTIDE SEQUENCE [LARGE SCALE GENOMIC DNA]</scope>
    <source>
        <strain>ATCC 11635 / DSM 40517 / JCM 4748 / NBRC 13426 / NCIMB 8594 / NRRL 2338</strain>
    </source>
</reference>
<proteinExistence type="inferred from homology"/>
<dbReference type="EC" id="2.8.1.6" evidence="1"/>
<dbReference type="EMBL" id="AM420293">
    <property type="protein sequence ID" value="CAM03951.1"/>
    <property type="molecule type" value="Genomic_DNA"/>
</dbReference>
<dbReference type="RefSeq" id="WP_009948433.1">
    <property type="nucleotide sequence ID" value="NC_009142.1"/>
</dbReference>
<dbReference type="SMR" id="A4FIS6"/>
<dbReference type="STRING" id="405948.SACE_4683"/>
<dbReference type="KEGG" id="sen:SACE_4683"/>
<dbReference type="eggNOG" id="COG0502">
    <property type="taxonomic scope" value="Bacteria"/>
</dbReference>
<dbReference type="HOGENOM" id="CLU_033172_2_1_11"/>
<dbReference type="OrthoDB" id="9786826at2"/>
<dbReference type="UniPathway" id="UPA00078">
    <property type="reaction ID" value="UER00162"/>
</dbReference>
<dbReference type="Proteomes" id="UP000006728">
    <property type="component" value="Chromosome"/>
</dbReference>
<dbReference type="GO" id="GO:0051537">
    <property type="term" value="F:2 iron, 2 sulfur cluster binding"/>
    <property type="evidence" value="ECO:0007669"/>
    <property type="project" value="UniProtKB-KW"/>
</dbReference>
<dbReference type="GO" id="GO:0051539">
    <property type="term" value="F:4 iron, 4 sulfur cluster binding"/>
    <property type="evidence" value="ECO:0007669"/>
    <property type="project" value="UniProtKB-KW"/>
</dbReference>
<dbReference type="GO" id="GO:0004076">
    <property type="term" value="F:biotin synthase activity"/>
    <property type="evidence" value="ECO:0007669"/>
    <property type="project" value="UniProtKB-UniRule"/>
</dbReference>
<dbReference type="GO" id="GO:0005506">
    <property type="term" value="F:iron ion binding"/>
    <property type="evidence" value="ECO:0007669"/>
    <property type="project" value="UniProtKB-UniRule"/>
</dbReference>
<dbReference type="GO" id="GO:0009102">
    <property type="term" value="P:biotin biosynthetic process"/>
    <property type="evidence" value="ECO:0007669"/>
    <property type="project" value="UniProtKB-UniRule"/>
</dbReference>
<dbReference type="CDD" id="cd01335">
    <property type="entry name" value="Radical_SAM"/>
    <property type="match status" value="1"/>
</dbReference>
<dbReference type="FunFam" id="3.20.20.70:FF:000026">
    <property type="entry name" value="Biotin synthase"/>
    <property type="match status" value="1"/>
</dbReference>
<dbReference type="Gene3D" id="3.20.20.70">
    <property type="entry name" value="Aldolase class I"/>
    <property type="match status" value="1"/>
</dbReference>
<dbReference type="HAMAP" id="MF_01694">
    <property type="entry name" value="BioB"/>
    <property type="match status" value="1"/>
</dbReference>
<dbReference type="InterPro" id="IPR013785">
    <property type="entry name" value="Aldolase_TIM"/>
</dbReference>
<dbReference type="InterPro" id="IPR010722">
    <property type="entry name" value="BATS_dom"/>
</dbReference>
<dbReference type="InterPro" id="IPR002684">
    <property type="entry name" value="Biotin_synth/BioAB"/>
</dbReference>
<dbReference type="InterPro" id="IPR024177">
    <property type="entry name" value="Biotin_synthase"/>
</dbReference>
<dbReference type="InterPro" id="IPR006638">
    <property type="entry name" value="Elp3/MiaA/NifB-like_rSAM"/>
</dbReference>
<dbReference type="InterPro" id="IPR007197">
    <property type="entry name" value="rSAM"/>
</dbReference>
<dbReference type="NCBIfam" id="TIGR00433">
    <property type="entry name" value="bioB"/>
    <property type="match status" value="1"/>
</dbReference>
<dbReference type="PANTHER" id="PTHR22976">
    <property type="entry name" value="BIOTIN SYNTHASE"/>
    <property type="match status" value="1"/>
</dbReference>
<dbReference type="PANTHER" id="PTHR22976:SF2">
    <property type="entry name" value="BIOTIN SYNTHASE, MITOCHONDRIAL"/>
    <property type="match status" value="1"/>
</dbReference>
<dbReference type="Pfam" id="PF06968">
    <property type="entry name" value="BATS"/>
    <property type="match status" value="1"/>
</dbReference>
<dbReference type="Pfam" id="PF04055">
    <property type="entry name" value="Radical_SAM"/>
    <property type="match status" value="1"/>
</dbReference>
<dbReference type="PIRSF" id="PIRSF001619">
    <property type="entry name" value="Biotin_synth"/>
    <property type="match status" value="1"/>
</dbReference>
<dbReference type="SFLD" id="SFLDG01278">
    <property type="entry name" value="biotin_synthase_like"/>
    <property type="match status" value="1"/>
</dbReference>
<dbReference type="SFLD" id="SFLDS00029">
    <property type="entry name" value="Radical_SAM"/>
    <property type="match status" value="1"/>
</dbReference>
<dbReference type="SMART" id="SM00876">
    <property type="entry name" value="BATS"/>
    <property type="match status" value="1"/>
</dbReference>
<dbReference type="SMART" id="SM00729">
    <property type="entry name" value="Elp3"/>
    <property type="match status" value="1"/>
</dbReference>
<dbReference type="SUPFAM" id="SSF102114">
    <property type="entry name" value="Radical SAM enzymes"/>
    <property type="match status" value="1"/>
</dbReference>
<dbReference type="PROSITE" id="PS51918">
    <property type="entry name" value="RADICAL_SAM"/>
    <property type="match status" value="1"/>
</dbReference>
<keyword id="KW-0001">2Fe-2S</keyword>
<keyword id="KW-0004">4Fe-4S</keyword>
<keyword id="KW-0093">Biotin biosynthesis</keyword>
<keyword id="KW-0408">Iron</keyword>
<keyword id="KW-0411">Iron-sulfur</keyword>
<keyword id="KW-0479">Metal-binding</keyword>
<keyword id="KW-1185">Reference proteome</keyword>
<keyword id="KW-0949">S-adenosyl-L-methionine</keyword>
<keyword id="KW-0808">Transferase</keyword>
<organism>
    <name type="scientific">Saccharopolyspora erythraea (strain ATCC 11635 / DSM 40517 / JCM 4748 / NBRC 13426 / NCIMB 8594 / NRRL 2338)</name>
    <dbReference type="NCBI Taxonomy" id="405948"/>
    <lineage>
        <taxon>Bacteria</taxon>
        <taxon>Bacillati</taxon>
        <taxon>Actinomycetota</taxon>
        <taxon>Actinomycetes</taxon>
        <taxon>Pseudonocardiales</taxon>
        <taxon>Pseudonocardiaceae</taxon>
        <taxon>Saccharopolyspora</taxon>
    </lineage>
</organism>
<accession>A4FIS6</accession>
<comment type="function">
    <text evidence="1">Catalyzes the conversion of dethiobiotin (DTB) to biotin by the insertion of a sulfur atom into dethiobiotin via a radical-based mechanism.</text>
</comment>
<comment type="catalytic activity">
    <reaction evidence="1">
        <text>(4R,5S)-dethiobiotin + (sulfur carrier)-SH + 2 reduced [2Fe-2S]-[ferredoxin] + 2 S-adenosyl-L-methionine = (sulfur carrier)-H + biotin + 2 5'-deoxyadenosine + 2 L-methionine + 2 oxidized [2Fe-2S]-[ferredoxin]</text>
        <dbReference type="Rhea" id="RHEA:22060"/>
        <dbReference type="Rhea" id="RHEA-COMP:10000"/>
        <dbReference type="Rhea" id="RHEA-COMP:10001"/>
        <dbReference type="Rhea" id="RHEA-COMP:14737"/>
        <dbReference type="Rhea" id="RHEA-COMP:14739"/>
        <dbReference type="ChEBI" id="CHEBI:17319"/>
        <dbReference type="ChEBI" id="CHEBI:29917"/>
        <dbReference type="ChEBI" id="CHEBI:33737"/>
        <dbReference type="ChEBI" id="CHEBI:33738"/>
        <dbReference type="ChEBI" id="CHEBI:57586"/>
        <dbReference type="ChEBI" id="CHEBI:57844"/>
        <dbReference type="ChEBI" id="CHEBI:59789"/>
        <dbReference type="ChEBI" id="CHEBI:64428"/>
        <dbReference type="ChEBI" id="CHEBI:149473"/>
        <dbReference type="EC" id="2.8.1.6"/>
    </reaction>
</comment>
<comment type="cofactor">
    <cofactor evidence="1">
        <name>[4Fe-4S] cluster</name>
        <dbReference type="ChEBI" id="CHEBI:49883"/>
    </cofactor>
    <text evidence="1">Binds 1 [4Fe-4S] cluster. The cluster is coordinated with 3 cysteines and an exchangeable S-adenosyl-L-methionine.</text>
</comment>
<comment type="cofactor">
    <cofactor evidence="1">
        <name>[2Fe-2S] cluster</name>
        <dbReference type="ChEBI" id="CHEBI:190135"/>
    </cofactor>
    <text evidence="1">Binds 1 [2Fe-2S] cluster. The cluster is coordinated with 3 cysteines and 1 arginine.</text>
</comment>
<comment type="pathway">
    <text evidence="1">Cofactor biosynthesis; biotin biosynthesis; biotin from 7,8-diaminononanoate: step 2/2.</text>
</comment>
<comment type="subunit">
    <text evidence="1">Homodimer.</text>
</comment>
<comment type="similarity">
    <text evidence="1">Belongs to the radical SAM superfamily. Biotin synthase family.</text>
</comment>
<sequence length="355" mass="38057">MNAPFHQLADAILAGTPATPEDALAVLRADDAELMSVVAAAGRLRRAHFGNTVKVNYLVNLKSGLCPENCNYCSQALGSDAPILKYSWLSKDETLKQTGAGLRGGASRVCLVSSGRGPSTRDIDKVTEMVVALKEEYPGVEVCACLGLLKDGQAQRLKDAGVDAYNHNINTAESNHDNIVQTHTYADRVDTVEKAKGGGLSPCSGLIAGLGETDEQLVEALFALRELGSDSIPVNFLMPFDGTPFENTWELSPTRCVKILAMARFVCPDKEIRIAGGREMHLRSLQSIALQVANSVFLGDYLTSEGQDAKADLEMIRDNGFVVLGSEEDLAQQAREPIDPAIRQRGAGTDVVPNA</sequence>
<name>BIOB_SACEN</name>
<evidence type="ECO:0000255" key="1">
    <source>
        <dbReference type="HAMAP-Rule" id="MF_01694"/>
    </source>
</evidence>
<evidence type="ECO:0000255" key="2">
    <source>
        <dbReference type="PROSITE-ProRule" id="PRU01266"/>
    </source>
</evidence>